<gene>
    <name evidence="1" type="primary">cysS</name>
    <name type="ordered locus">GM21_3883</name>
</gene>
<dbReference type="EC" id="6.1.1.16" evidence="1"/>
<dbReference type="EMBL" id="CP001661">
    <property type="protein sequence ID" value="ACT19900.1"/>
    <property type="molecule type" value="Genomic_DNA"/>
</dbReference>
<dbReference type="SMR" id="C6E7P0"/>
<dbReference type="STRING" id="443144.GM21_3883"/>
<dbReference type="KEGG" id="gem:GM21_3883"/>
<dbReference type="eggNOG" id="COG0215">
    <property type="taxonomic scope" value="Bacteria"/>
</dbReference>
<dbReference type="HOGENOM" id="CLU_013528_0_1_7"/>
<dbReference type="OrthoDB" id="9815130at2"/>
<dbReference type="GO" id="GO:0005829">
    <property type="term" value="C:cytosol"/>
    <property type="evidence" value="ECO:0007669"/>
    <property type="project" value="TreeGrafter"/>
</dbReference>
<dbReference type="GO" id="GO:0005524">
    <property type="term" value="F:ATP binding"/>
    <property type="evidence" value="ECO:0007669"/>
    <property type="project" value="UniProtKB-UniRule"/>
</dbReference>
<dbReference type="GO" id="GO:0004817">
    <property type="term" value="F:cysteine-tRNA ligase activity"/>
    <property type="evidence" value="ECO:0007669"/>
    <property type="project" value="UniProtKB-UniRule"/>
</dbReference>
<dbReference type="GO" id="GO:0008270">
    <property type="term" value="F:zinc ion binding"/>
    <property type="evidence" value="ECO:0007669"/>
    <property type="project" value="UniProtKB-UniRule"/>
</dbReference>
<dbReference type="GO" id="GO:0006423">
    <property type="term" value="P:cysteinyl-tRNA aminoacylation"/>
    <property type="evidence" value="ECO:0007669"/>
    <property type="project" value="UniProtKB-UniRule"/>
</dbReference>
<dbReference type="CDD" id="cd07963">
    <property type="entry name" value="Anticodon_Ia_Cys"/>
    <property type="match status" value="1"/>
</dbReference>
<dbReference type="CDD" id="cd00672">
    <property type="entry name" value="CysRS_core"/>
    <property type="match status" value="1"/>
</dbReference>
<dbReference type="FunFam" id="3.40.50.620:FF:000009">
    <property type="entry name" value="Cysteine--tRNA ligase"/>
    <property type="match status" value="1"/>
</dbReference>
<dbReference type="Gene3D" id="1.20.120.1910">
    <property type="entry name" value="Cysteine-tRNA ligase, C-terminal anti-codon recognition domain"/>
    <property type="match status" value="1"/>
</dbReference>
<dbReference type="Gene3D" id="3.40.50.620">
    <property type="entry name" value="HUPs"/>
    <property type="match status" value="1"/>
</dbReference>
<dbReference type="HAMAP" id="MF_00041">
    <property type="entry name" value="Cys_tRNA_synth"/>
    <property type="match status" value="1"/>
</dbReference>
<dbReference type="InterPro" id="IPR015803">
    <property type="entry name" value="Cys-tRNA-ligase"/>
</dbReference>
<dbReference type="InterPro" id="IPR015273">
    <property type="entry name" value="Cys-tRNA-synt_Ia_DALR"/>
</dbReference>
<dbReference type="InterPro" id="IPR024909">
    <property type="entry name" value="Cys-tRNA/MSH_ligase"/>
</dbReference>
<dbReference type="InterPro" id="IPR014729">
    <property type="entry name" value="Rossmann-like_a/b/a_fold"/>
</dbReference>
<dbReference type="InterPro" id="IPR032678">
    <property type="entry name" value="tRNA-synt_1_cat_dom"/>
</dbReference>
<dbReference type="InterPro" id="IPR009080">
    <property type="entry name" value="tRNAsynth_Ia_anticodon-bd"/>
</dbReference>
<dbReference type="NCBIfam" id="TIGR00435">
    <property type="entry name" value="cysS"/>
    <property type="match status" value="1"/>
</dbReference>
<dbReference type="PANTHER" id="PTHR10890:SF3">
    <property type="entry name" value="CYSTEINE--TRNA LIGASE, CYTOPLASMIC"/>
    <property type="match status" value="1"/>
</dbReference>
<dbReference type="PANTHER" id="PTHR10890">
    <property type="entry name" value="CYSTEINYL-TRNA SYNTHETASE"/>
    <property type="match status" value="1"/>
</dbReference>
<dbReference type="Pfam" id="PF09190">
    <property type="entry name" value="DALR_2"/>
    <property type="match status" value="1"/>
</dbReference>
<dbReference type="Pfam" id="PF01406">
    <property type="entry name" value="tRNA-synt_1e"/>
    <property type="match status" value="1"/>
</dbReference>
<dbReference type="PRINTS" id="PR00983">
    <property type="entry name" value="TRNASYNTHCYS"/>
</dbReference>
<dbReference type="SMART" id="SM00840">
    <property type="entry name" value="DALR_2"/>
    <property type="match status" value="1"/>
</dbReference>
<dbReference type="SUPFAM" id="SSF47323">
    <property type="entry name" value="Anticodon-binding domain of a subclass of class I aminoacyl-tRNA synthetases"/>
    <property type="match status" value="1"/>
</dbReference>
<dbReference type="SUPFAM" id="SSF52374">
    <property type="entry name" value="Nucleotidylyl transferase"/>
    <property type="match status" value="1"/>
</dbReference>
<keyword id="KW-0030">Aminoacyl-tRNA synthetase</keyword>
<keyword id="KW-0067">ATP-binding</keyword>
<keyword id="KW-0963">Cytoplasm</keyword>
<keyword id="KW-0436">Ligase</keyword>
<keyword id="KW-0479">Metal-binding</keyword>
<keyword id="KW-0547">Nucleotide-binding</keyword>
<keyword id="KW-0648">Protein biosynthesis</keyword>
<keyword id="KW-0862">Zinc</keyword>
<proteinExistence type="inferred from homology"/>
<evidence type="ECO:0000255" key="1">
    <source>
        <dbReference type="HAMAP-Rule" id="MF_00041"/>
    </source>
</evidence>
<feature type="chain" id="PRO_1000202124" description="Cysteine--tRNA ligase">
    <location>
        <begin position="1"/>
        <end position="480"/>
    </location>
</feature>
<feature type="short sequence motif" description="'HIGH' region">
    <location>
        <begin position="31"/>
        <end position="41"/>
    </location>
</feature>
<feature type="short sequence motif" description="'KMSKS' region">
    <location>
        <begin position="266"/>
        <end position="270"/>
    </location>
</feature>
<feature type="binding site" evidence="1">
    <location>
        <position position="29"/>
    </location>
    <ligand>
        <name>Zn(2+)</name>
        <dbReference type="ChEBI" id="CHEBI:29105"/>
    </ligand>
</feature>
<feature type="binding site" evidence="1">
    <location>
        <position position="209"/>
    </location>
    <ligand>
        <name>Zn(2+)</name>
        <dbReference type="ChEBI" id="CHEBI:29105"/>
    </ligand>
</feature>
<feature type="binding site" evidence="1">
    <location>
        <position position="234"/>
    </location>
    <ligand>
        <name>Zn(2+)</name>
        <dbReference type="ChEBI" id="CHEBI:29105"/>
    </ligand>
</feature>
<feature type="binding site" evidence="1">
    <location>
        <position position="238"/>
    </location>
    <ligand>
        <name>Zn(2+)</name>
        <dbReference type="ChEBI" id="CHEBI:29105"/>
    </ligand>
</feature>
<feature type="binding site" evidence="1">
    <location>
        <position position="269"/>
    </location>
    <ligand>
        <name>ATP</name>
        <dbReference type="ChEBI" id="CHEBI:30616"/>
    </ligand>
</feature>
<reference key="1">
    <citation type="submission" date="2009-07" db="EMBL/GenBank/DDBJ databases">
        <title>Complete sequence of Geobacter sp. M21.</title>
        <authorList>
            <consortium name="US DOE Joint Genome Institute"/>
            <person name="Lucas S."/>
            <person name="Copeland A."/>
            <person name="Lapidus A."/>
            <person name="Glavina del Rio T."/>
            <person name="Dalin E."/>
            <person name="Tice H."/>
            <person name="Bruce D."/>
            <person name="Goodwin L."/>
            <person name="Pitluck S."/>
            <person name="Saunders E."/>
            <person name="Brettin T."/>
            <person name="Detter J.C."/>
            <person name="Han C."/>
            <person name="Larimer F."/>
            <person name="Land M."/>
            <person name="Hauser L."/>
            <person name="Kyrpides N."/>
            <person name="Ovchinnikova G."/>
            <person name="Lovley D."/>
        </authorList>
    </citation>
    <scope>NUCLEOTIDE SEQUENCE [LARGE SCALE GENOMIC DNA]</scope>
    <source>
        <strain>M21</strain>
    </source>
</reference>
<organism>
    <name type="scientific">Geobacter sp. (strain M21)</name>
    <dbReference type="NCBI Taxonomy" id="443144"/>
    <lineage>
        <taxon>Bacteria</taxon>
        <taxon>Pseudomonadati</taxon>
        <taxon>Thermodesulfobacteriota</taxon>
        <taxon>Desulfuromonadia</taxon>
        <taxon>Geobacterales</taxon>
        <taxon>Geobacteraceae</taxon>
        <taxon>Geobacter</taxon>
    </lineage>
</organism>
<accession>C6E7P0</accession>
<protein>
    <recommendedName>
        <fullName evidence="1">Cysteine--tRNA ligase</fullName>
        <ecNumber evidence="1">6.1.1.16</ecNumber>
    </recommendedName>
    <alternativeName>
        <fullName evidence="1">Cysteinyl-tRNA synthetase</fullName>
        <shortName evidence="1">CysRS</shortName>
    </alternativeName>
</protein>
<comment type="catalytic activity">
    <reaction evidence="1">
        <text>tRNA(Cys) + L-cysteine + ATP = L-cysteinyl-tRNA(Cys) + AMP + diphosphate</text>
        <dbReference type="Rhea" id="RHEA:17773"/>
        <dbReference type="Rhea" id="RHEA-COMP:9661"/>
        <dbReference type="Rhea" id="RHEA-COMP:9679"/>
        <dbReference type="ChEBI" id="CHEBI:30616"/>
        <dbReference type="ChEBI" id="CHEBI:33019"/>
        <dbReference type="ChEBI" id="CHEBI:35235"/>
        <dbReference type="ChEBI" id="CHEBI:78442"/>
        <dbReference type="ChEBI" id="CHEBI:78517"/>
        <dbReference type="ChEBI" id="CHEBI:456215"/>
        <dbReference type="EC" id="6.1.1.16"/>
    </reaction>
</comment>
<comment type="cofactor">
    <cofactor evidence="1">
        <name>Zn(2+)</name>
        <dbReference type="ChEBI" id="CHEBI:29105"/>
    </cofactor>
    <text evidence="1">Binds 1 zinc ion per subunit.</text>
</comment>
<comment type="subunit">
    <text evidence="1">Monomer.</text>
</comment>
<comment type="subcellular location">
    <subcellularLocation>
        <location evidence="1">Cytoplasm</location>
    </subcellularLocation>
</comment>
<comment type="similarity">
    <text evidence="1">Belongs to the class-I aminoacyl-tRNA synthetase family.</text>
</comment>
<sequence length="480" mass="54244">MPLRVYNTLTGSKEEFVPINPGKVGMYVCGVTVYDHCHIGHARANVVFDMIYRHLLSKGLEVTYVRNYTDIDDKIINRANRDGVAYNEISERFIKEFDNDMARLMLQLPTFQPKATEHIPEIINLVQKLIDKGFAYQSGSDVFYRVDRFEGYLKLSKRNLEDMQAGARIDVDERKEHPMDFALWKGAKPGEPYWESPWGQGRPGWHIECSAMSTKFLGETLDIHGGGKDLIFPHHENEIAQSEAASGKPFVKYWLHNGFVNINSEKMSKSLGNFFTIKEILESYDAEVLRFFLLSAHYRSPIDFSDQNLKEAELGLERIYKALAGIDERLASGAHTPADADNTEFAEKVAGFAGRFGDAMDDDFNTALALGHLFDLVRVINRELPTASTGLLEKVKAEVAKMAAVLGICDSVPAAFLQRMKDRKTSDMEMSAEEIETLIAERAEARKAKNFKRGDEIRDLLLEKNIVLLDSAQGTTWKVK</sequence>
<name>SYC_GEOSM</name>